<proteinExistence type="inferred from homology"/>
<reference key="1">
    <citation type="submission" date="2007-03" db="EMBL/GenBank/DDBJ databases">
        <title>Complete sequence of Prosthecochloris vibrioformis DSM 265.</title>
        <authorList>
            <consortium name="US DOE Joint Genome Institute"/>
            <person name="Copeland A."/>
            <person name="Lucas S."/>
            <person name="Lapidus A."/>
            <person name="Barry K."/>
            <person name="Detter J.C."/>
            <person name="Glavina del Rio T."/>
            <person name="Hammon N."/>
            <person name="Israni S."/>
            <person name="Pitluck S."/>
            <person name="Schmutz J."/>
            <person name="Larimer F."/>
            <person name="Land M."/>
            <person name="Hauser L."/>
            <person name="Mikhailova N."/>
            <person name="Li T."/>
            <person name="Overmann J."/>
            <person name="Schuster S.C."/>
            <person name="Bryant D.A."/>
            <person name="Richardson P."/>
        </authorList>
    </citation>
    <scope>NUCLEOTIDE SEQUENCE [LARGE SCALE GENOMIC DNA]</scope>
    <source>
        <strain>DSM 265 / 1930</strain>
    </source>
</reference>
<keyword id="KW-0687">Ribonucleoprotein</keyword>
<keyword id="KW-0689">Ribosomal protein</keyword>
<keyword id="KW-0694">RNA-binding</keyword>
<keyword id="KW-0699">rRNA-binding</keyword>
<evidence type="ECO:0000255" key="1">
    <source>
        <dbReference type="HAMAP-Rule" id="MF_01369"/>
    </source>
</evidence>
<evidence type="ECO:0000305" key="2"/>
<accession>A4SCR1</accession>
<sequence>MKNPLLRPWLTEKSTGLTEDRGQYVFQVKLDADKIDIKMAVEEKFGVDVKSVRTLNSLGKTRRQNTRKGLVTGKKNDTKKAIVTLGEGQTIDFYSGANPKGDA</sequence>
<name>RL23_CHLPM</name>
<dbReference type="EMBL" id="CP000607">
    <property type="protein sequence ID" value="ABP36270.1"/>
    <property type="molecule type" value="Genomic_DNA"/>
</dbReference>
<dbReference type="SMR" id="A4SCR1"/>
<dbReference type="STRING" id="290318.Cvib_0248"/>
<dbReference type="KEGG" id="pvi:Cvib_0248"/>
<dbReference type="eggNOG" id="COG0089">
    <property type="taxonomic scope" value="Bacteria"/>
</dbReference>
<dbReference type="HOGENOM" id="CLU_037562_3_0_10"/>
<dbReference type="OrthoDB" id="9797862at2"/>
<dbReference type="GO" id="GO:1990904">
    <property type="term" value="C:ribonucleoprotein complex"/>
    <property type="evidence" value="ECO:0007669"/>
    <property type="project" value="UniProtKB-KW"/>
</dbReference>
<dbReference type="GO" id="GO:0005840">
    <property type="term" value="C:ribosome"/>
    <property type="evidence" value="ECO:0007669"/>
    <property type="project" value="UniProtKB-KW"/>
</dbReference>
<dbReference type="GO" id="GO:0019843">
    <property type="term" value="F:rRNA binding"/>
    <property type="evidence" value="ECO:0007669"/>
    <property type="project" value="UniProtKB-UniRule"/>
</dbReference>
<dbReference type="GO" id="GO:0003735">
    <property type="term" value="F:structural constituent of ribosome"/>
    <property type="evidence" value="ECO:0007669"/>
    <property type="project" value="InterPro"/>
</dbReference>
<dbReference type="GO" id="GO:0006412">
    <property type="term" value="P:translation"/>
    <property type="evidence" value="ECO:0007669"/>
    <property type="project" value="UniProtKB-UniRule"/>
</dbReference>
<dbReference type="FunFam" id="3.30.70.330:FF:000001">
    <property type="entry name" value="50S ribosomal protein L23"/>
    <property type="match status" value="1"/>
</dbReference>
<dbReference type="Gene3D" id="3.30.70.330">
    <property type="match status" value="1"/>
</dbReference>
<dbReference type="HAMAP" id="MF_01369_B">
    <property type="entry name" value="Ribosomal_uL23_B"/>
    <property type="match status" value="1"/>
</dbReference>
<dbReference type="InterPro" id="IPR012677">
    <property type="entry name" value="Nucleotide-bd_a/b_plait_sf"/>
</dbReference>
<dbReference type="InterPro" id="IPR013025">
    <property type="entry name" value="Ribosomal_uL23-like"/>
</dbReference>
<dbReference type="InterPro" id="IPR012678">
    <property type="entry name" value="Ribosomal_uL23/eL15/eS24_sf"/>
</dbReference>
<dbReference type="NCBIfam" id="NF004363">
    <property type="entry name" value="PRK05738.2-4"/>
    <property type="match status" value="1"/>
</dbReference>
<dbReference type="PANTHER" id="PTHR11620">
    <property type="entry name" value="60S RIBOSOMAL PROTEIN L23A"/>
    <property type="match status" value="1"/>
</dbReference>
<dbReference type="Pfam" id="PF00276">
    <property type="entry name" value="Ribosomal_L23"/>
    <property type="match status" value="1"/>
</dbReference>
<dbReference type="SUPFAM" id="SSF54189">
    <property type="entry name" value="Ribosomal proteins S24e, L23 and L15e"/>
    <property type="match status" value="1"/>
</dbReference>
<protein>
    <recommendedName>
        <fullName evidence="1">Large ribosomal subunit protein uL23</fullName>
    </recommendedName>
    <alternativeName>
        <fullName evidence="2">50S ribosomal protein L23</fullName>
    </alternativeName>
</protein>
<comment type="function">
    <text evidence="1">One of the early assembly proteins it binds 23S rRNA. One of the proteins that surrounds the polypeptide exit tunnel on the outside of the ribosome. Forms the main docking site for trigger factor binding to the ribosome.</text>
</comment>
<comment type="subunit">
    <text evidence="1">Part of the 50S ribosomal subunit. Contacts protein L29, and trigger factor when it is bound to the ribosome.</text>
</comment>
<comment type="similarity">
    <text evidence="1">Belongs to the universal ribosomal protein uL23 family.</text>
</comment>
<organism>
    <name type="scientific">Chlorobium phaeovibrioides (strain DSM 265 / 1930)</name>
    <name type="common">Prosthecochloris vibrioformis (strain DSM 265)</name>
    <dbReference type="NCBI Taxonomy" id="290318"/>
    <lineage>
        <taxon>Bacteria</taxon>
        <taxon>Pseudomonadati</taxon>
        <taxon>Chlorobiota</taxon>
        <taxon>Chlorobiia</taxon>
        <taxon>Chlorobiales</taxon>
        <taxon>Chlorobiaceae</taxon>
        <taxon>Chlorobium/Pelodictyon group</taxon>
        <taxon>Chlorobium</taxon>
    </lineage>
</organism>
<gene>
    <name evidence="1" type="primary">rplW</name>
    <name type="ordered locus">Cvib_0248</name>
</gene>
<feature type="chain" id="PRO_1000087225" description="Large ribosomal subunit protein uL23">
    <location>
        <begin position="1"/>
        <end position="103"/>
    </location>
</feature>